<reference key="1">
    <citation type="submission" date="2008-03" db="EMBL/GenBank/DDBJ databases">
        <title>Complete sequence of Leptothrix cholodnii SP-6.</title>
        <authorList>
            <consortium name="US DOE Joint Genome Institute"/>
            <person name="Copeland A."/>
            <person name="Lucas S."/>
            <person name="Lapidus A."/>
            <person name="Glavina del Rio T."/>
            <person name="Dalin E."/>
            <person name="Tice H."/>
            <person name="Bruce D."/>
            <person name="Goodwin L."/>
            <person name="Pitluck S."/>
            <person name="Chertkov O."/>
            <person name="Brettin T."/>
            <person name="Detter J.C."/>
            <person name="Han C."/>
            <person name="Kuske C.R."/>
            <person name="Schmutz J."/>
            <person name="Larimer F."/>
            <person name="Land M."/>
            <person name="Hauser L."/>
            <person name="Kyrpides N."/>
            <person name="Lykidis A."/>
            <person name="Emerson D."/>
            <person name="Richardson P."/>
        </authorList>
    </citation>
    <scope>NUCLEOTIDE SEQUENCE [LARGE SCALE GENOMIC DNA]</scope>
    <source>
        <strain>ATCC 51168 / LMG 8142 / SP-6</strain>
    </source>
</reference>
<feature type="chain" id="PRO_1000089656" description="Holliday junction branch migration complex subunit RuvB">
    <location>
        <begin position="1"/>
        <end position="363"/>
    </location>
</feature>
<feature type="region of interest" description="Disordered" evidence="2">
    <location>
        <begin position="1"/>
        <end position="32"/>
    </location>
</feature>
<feature type="region of interest" description="Large ATPase domain (RuvB-L)" evidence="1">
    <location>
        <begin position="13"/>
        <end position="200"/>
    </location>
</feature>
<feature type="region of interest" description="Small ATPAse domain (RuvB-S)" evidence="1">
    <location>
        <begin position="201"/>
        <end position="271"/>
    </location>
</feature>
<feature type="region of interest" description="Head domain (RuvB-H)" evidence="1">
    <location>
        <begin position="274"/>
        <end position="363"/>
    </location>
</feature>
<feature type="compositionally biased region" description="Low complexity" evidence="2">
    <location>
        <begin position="7"/>
        <end position="18"/>
    </location>
</feature>
<feature type="binding site" evidence="1">
    <location>
        <position position="39"/>
    </location>
    <ligand>
        <name>ATP</name>
        <dbReference type="ChEBI" id="CHEBI:30616"/>
    </ligand>
</feature>
<feature type="binding site" evidence="1">
    <location>
        <position position="40"/>
    </location>
    <ligand>
        <name>ATP</name>
        <dbReference type="ChEBI" id="CHEBI:30616"/>
    </ligand>
</feature>
<feature type="binding site" evidence="1">
    <location>
        <position position="81"/>
    </location>
    <ligand>
        <name>ATP</name>
        <dbReference type="ChEBI" id="CHEBI:30616"/>
    </ligand>
</feature>
<feature type="binding site" evidence="1">
    <location>
        <position position="84"/>
    </location>
    <ligand>
        <name>ATP</name>
        <dbReference type="ChEBI" id="CHEBI:30616"/>
    </ligand>
</feature>
<feature type="binding site" evidence="1">
    <location>
        <position position="85"/>
    </location>
    <ligand>
        <name>ATP</name>
        <dbReference type="ChEBI" id="CHEBI:30616"/>
    </ligand>
</feature>
<feature type="binding site" evidence="1">
    <location>
        <position position="85"/>
    </location>
    <ligand>
        <name>Mg(2+)</name>
        <dbReference type="ChEBI" id="CHEBI:18420"/>
    </ligand>
</feature>
<feature type="binding site" evidence="1">
    <location>
        <position position="86"/>
    </location>
    <ligand>
        <name>ATP</name>
        <dbReference type="ChEBI" id="CHEBI:30616"/>
    </ligand>
</feature>
<feature type="binding site" evidence="1">
    <location>
        <begin position="147"/>
        <end position="149"/>
    </location>
    <ligand>
        <name>ATP</name>
        <dbReference type="ChEBI" id="CHEBI:30616"/>
    </ligand>
</feature>
<feature type="binding site" evidence="1">
    <location>
        <position position="190"/>
    </location>
    <ligand>
        <name>ATP</name>
        <dbReference type="ChEBI" id="CHEBI:30616"/>
    </ligand>
</feature>
<feature type="binding site" evidence="1">
    <location>
        <position position="200"/>
    </location>
    <ligand>
        <name>ATP</name>
        <dbReference type="ChEBI" id="CHEBI:30616"/>
    </ligand>
</feature>
<feature type="binding site" evidence="1">
    <location>
        <position position="237"/>
    </location>
    <ligand>
        <name>ATP</name>
        <dbReference type="ChEBI" id="CHEBI:30616"/>
    </ligand>
</feature>
<feature type="binding site" evidence="1">
    <location>
        <position position="329"/>
    </location>
    <ligand>
        <name>DNA</name>
        <dbReference type="ChEBI" id="CHEBI:16991"/>
    </ligand>
</feature>
<feature type="binding site" evidence="1">
    <location>
        <position position="334"/>
    </location>
    <ligand>
        <name>DNA</name>
        <dbReference type="ChEBI" id="CHEBI:16991"/>
    </ligand>
</feature>
<protein>
    <recommendedName>
        <fullName evidence="1">Holliday junction branch migration complex subunit RuvB</fullName>
        <ecNumber evidence="1">3.6.4.-</ecNumber>
    </recommendedName>
</protein>
<name>RUVB_LEPCP</name>
<keyword id="KW-0067">ATP-binding</keyword>
<keyword id="KW-0963">Cytoplasm</keyword>
<keyword id="KW-0227">DNA damage</keyword>
<keyword id="KW-0233">DNA recombination</keyword>
<keyword id="KW-0234">DNA repair</keyword>
<keyword id="KW-0238">DNA-binding</keyword>
<keyword id="KW-0378">Hydrolase</keyword>
<keyword id="KW-0547">Nucleotide-binding</keyword>
<keyword id="KW-1185">Reference proteome</keyword>
<organism>
    <name type="scientific">Leptothrix cholodnii (strain ATCC 51168 / LMG 8142 / SP-6)</name>
    <name type="common">Leptothrix discophora (strain SP-6)</name>
    <dbReference type="NCBI Taxonomy" id="395495"/>
    <lineage>
        <taxon>Bacteria</taxon>
        <taxon>Pseudomonadati</taxon>
        <taxon>Pseudomonadota</taxon>
        <taxon>Betaproteobacteria</taxon>
        <taxon>Burkholderiales</taxon>
        <taxon>Sphaerotilaceae</taxon>
        <taxon>Leptothrix</taxon>
    </lineage>
</organism>
<evidence type="ECO:0000255" key="1">
    <source>
        <dbReference type="HAMAP-Rule" id="MF_00016"/>
    </source>
</evidence>
<evidence type="ECO:0000256" key="2">
    <source>
        <dbReference type="SAM" id="MobiDB-lite"/>
    </source>
</evidence>
<sequence>MAIQTDSFAAAPAPSSGSTRRLISAAPTSPNEEAMERALRPKLLQEYVGQAKAREQLEIFIGAARKRSEALDHVLLFGPPGLGKTTLSHIIAAELGVNLRQTSGPVLEKPKDLAAILTNLEANDVLFIDEIHRLSPVVEEILYPALEDYQIDIMIGEGPAARSIKLDLQPFTLVGATTRAGMLTNPLRDRFGIVARLEFYTPEELVRIVTRSAGLLNVPIDAEGALELACRSRGTPRIANRLLRRVRDYAEVKSDGRIVKRIAELALTMLDVDPRGFDVMDRKLLEAVIHRFDGGPVGLDNVAAAIGEDAGTIEDVIEPYLIQQGFLQRTPRGRIATLAAYRHLGVTPPRGGAGPVGSDLFEG</sequence>
<dbReference type="EC" id="3.6.4.-" evidence="1"/>
<dbReference type="EMBL" id="CP001013">
    <property type="protein sequence ID" value="ACB36208.1"/>
    <property type="molecule type" value="Genomic_DNA"/>
</dbReference>
<dbReference type="RefSeq" id="WP_012348953.1">
    <property type="nucleotide sequence ID" value="NC_010524.1"/>
</dbReference>
<dbReference type="SMR" id="B1Y8E2"/>
<dbReference type="STRING" id="395495.Lcho_3954"/>
<dbReference type="KEGG" id="lch:Lcho_3954"/>
<dbReference type="eggNOG" id="COG2255">
    <property type="taxonomic scope" value="Bacteria"/>
</dbReference>
<dbReference type="HOGENOM" id="CLU_055599_1_0_4"/>
<dbReference type="OrthoDB" id="9804478at2"/>
<dbReference type="Proteomes" id="UP000001693">
    <property type="component" value="Chromosome"/>
</dbReference>
<dbReference type="GO" id="GO:0005737">
    <property type="term" value="C:cytoplasm"/>
    <property type="evidence" value="ECO:0007669"/>
    <property type="project" value="UniProtKB-SubCell"/>
</dbReference>
<dbReference type="GO" id="GO:0048476">
    <property type="term" value="C:Holliday junction resolvase complex"/>
    <property type="evidence" value="ECO:0007669"/>
    <property type="project" value="UniProtKB-UniRule"/>
</dbReference>
<dbReference type="GO" id="GO:0005524">
    <property type="term" value="F:ATP binding"/>
    <property type="evidence" value="ECO:0007669"/>
    <property type="project" value="UniProtKB-UniRule"/>
</dbReference>
<dbReference type="GO" id="GO:0016887">
    <property type="term" value="F:ATP hydrolysis activity"/>
    <property type="evidence" value="ECO:0007669"/>
    <property type="project" value="InterPro"/>
</dbReference>
<dbReference type="GO" id="GO:0000400">
    <property type="term" value="F:four-way junction DNA binding"/>
    <property type="evidence" value="ECO:0007669"/>
    <property type="project" value="UniProtKB-UniRule"/>
</dbReference>
<dbReference type="GO" id="GO:0009378">
    <property type="term" value="F:four-way junction helicase activity"/>
    <property type="evidence" value="ECO:0007669"/>
    <property type="project" value="InterPro"/>
</dbReference>
<dbReference type="GO" id="GO:0006310">
    <property type="term" value="P:DNA recombination"/>
    <property type="evidence" value="ECO:0007669"/>
    <property type="project" value="UniProtKB-UniRule"/>
</dbReference>
<dbReference type="GO" id="GO:0006281">
    <property type="term" value="P:DNA repair"/>
    <property type="evidence" value="ECO:0007669"/>
    <property type="project" value="UniProtKB-UniRule"/>
</dbReference>
<dbReference type="CDD" id="cd00009">
    <property type="entry name" value="AAA"/>
    <property type="match status" value="1"/>
</dbReference>
<dbReference type="FunFam" id="1.10.10.10:FF:000086">
    <property type="entry name" value="Holliday junction ATP-dependent DNA helicase RuvB"/>
    <property type="match status" value="1"/>
</dbReference>
<dbReference type="FunFam" id="3.40.50.300:FF:000073">
    <property type="entry name" value="Holliday junction ATP-dependent DNA helicase RuvB"/>
    <property type="match status" value="1"/>
</dbReference>
<dbReference type="Gene3D" id="1.10.8.60">
    <property type="match status" value="1"/>
</dbReference>
<dbReference type="Gene3D" id="3.40.50.300">
    <property type="entry name" value="P-loop containing nucleotide triphosphate hydrolases"/>
    <property type="match status" value="1"/>
</dbReference>
<dbReference type="Gene3D" id="1.10.10.10">
    <property type="entry name" value="Winged helix-like DNA-binding domain superfamily/Winged helix DNA-binding domain"/>
    <property type="match status" value="1"/>
</dbReference>
<dbReference type="HAMAP" id="MF_00016">
    <property type="entry name" value="DNA_HJ_migration_RuvB"/>
    <property type="match status" value="1"/>
</dbReference>
<dbReference type="InterPro" id="IPR003593">
    <property type="entry name" value="AAA+_ATPase"/>
</dbReference>
<dbReference type="InterPro" id="IPR041445">
    <property type="entry name" value="AAA_lid_4"/>
</dbReference>
<dbReference type="InterPro" id="IPR004605">
    <property type="entry name" value="DNA_helicase_Holl-junc_RuvB"/>
</dbReference>
<dbReference type="InterPro" id="IPR027417">
    <property type="entry name" value="P-loop_NTPase"/>
</dbReference>
<dbReference type="InterPro" id="IPR008824">
    <property type="entry name" value="RuvB-like_N"/>
</dbReference>
<dbReference type="InterPro" id="IPR008823">
    <property type="entry name" value="RuvB_C"/>
</dbReference>
<dbReference type="InterPro" id="IPR036388">
    <property type="entry name" value="WH-like_DNA-bd_sf"/>
</dbReference>
<dbReference type="InterPro" id="IPR036390">
    <property type="entry name" value="WH_DNA-bd_sf"/>
</dbReference>
<dbReference type="NCBIfam" id="NF000868">
    <property type="entry name" value="PRK00080.1"/>
    <property type="match status" value="1"/>
</dbReference>
<dbReference type="NCBIfam" id="TIGR00635">
    <property type="entry name" value="ruvB"/>
    <property type="match status" value="1"/>
</dbReference>
<dbReference type="PANTHER" id="PTHR42848">
    <property type="match status" value="1"/>
</dbReference>
<dbReference type="PANTHER" id="PTHR42848:SF1">
    <property type="entry name" value="HOLLIDAY JUNCTION BRANCH MIGRATION COMPLEX SUBUNIT RUVB"/>
    <property type="match status" value="1"/>
</dbReference>
<dbReference type="Pfam" id="PF17864">
    <property type="entry name" value="AAA_lid_4"/>
    <property type="match status" value="1"/>
</dbReference>
<dbReference type="Pfam" id="PF05491">
    <property type="entry name" value="RuvB_C"/>
    <property type="match status" value="1"/>
</dbReference>
<dbReference type="Pfam" id="PF05496">
    <property type="entry name" value="RuvB_N"/>
    <property type="match status" value="1"/>
</dbReference>
<dbReference type="SMART" id="SM00382">
    <property type="entry name" value="AAA"/>
    <property type="match status" value="1"/>
</dbReference>
<dbReference type="SUPFAM" id="SSF52540">
    <property type="entry name" value="P-loop containing nucleoside triphosphate hydrolases"/>
    <property type="match status" value="1"/>
</dbReference>
<dbReference type="SUPFAM" id="SSF46785">
    <property type="entry name" value="Winged helix' DNA-binding domain"/>
    <property type="match status" value="1"/>
</dbReference>
<gene>
    <name evidence="1" type="primary">ruvB</name>
    <name type="ordered locus">Lcho_3954</name>
</gene>
<comment type="function">
    <text evidence="1">The RuvA-RuvB-RuvC complex processes Holliday junction (HJ) DNA during genetic recombination and DNA repair, while the RuvA-RuvB complex plays an important role in the rescue of blocked DNA replication forks via replication fork reversal (RFR). RuvA specifically binds to HJ cruciform DNA, conferring on it an open structure. The RuvB hexamer acts as an ATP-dependent pump, pulling dsDNA into and through the RuvAB complex. RuvB forms 2 homohexamers on either side of HJ DNA bound by 1 or 2 RuvA tetramers; 4 subunits per hexamer contact DNA at a time. Coordinated motions by a converter formed by DNA-disengaged RuvB subunits stimulates ATP hydrolysis and nucleotide exchange. Immobilization of the converter enables RuvB to convert the ATP-contained energy into a lever motion, pulling 2 nucleotides of DNA out of the RuvA tetramer per ATP hydrolyzed, thus driving DNA branch migration. The RuvB motors rotate together with the DNA substrate, which together with the progressing nucleotide cycle form the mechanistic basis for DNA recombination by continuous HJ branch migration. Branch migration allows RuvC to scan DNA until it finds its consensus sequence, where it cleaves and resolves cruciform DNA.</text>
</comment>
<comment type="catalytic activity">
    <reaction evidence="1">
        <text>ATP + H2O = ADP + phosphate + H(+)</text>
        <dbReference type="Rhea" id="RHEA:13065"/>
        <dbReference type="ChEBI" id="CHEBI:15377"/>
        <dbReference type="ChEBI" id="CHEBI:15378"/>
        <dbReference type="ChEBI" id="CHEBI:30616"/>
        <dbReference type="ChEBI" id="CHEBI:43474"/>
        <dbReference type="ChEBI" id="CHEBI:456216"/>
    </reaction>
</comment>
<comment type="subunit">
    <text evidence="1">Homohexamer. Forms an RuvA(8)-RuvB(12)-Holliday junction (HJ) complex. HJ DNA is sandwiched between 2 RuvA tetramers; dsDNA enters through RuvA and exits via RuvB. An RuvB hexamer assembles on each DNA strand where it exits the tetramer. Each RuvB hexamer is contacted by two RuvA subunits (via domain III) on 2 adjacent RuvB subunits; this complex drives branch migration. In the full resolvosome a probable DNA-RuvA(4)-RuvB(12)-RuvC(2) complex forms which resolves the HJ.</text>
</comment>
<comment type="subcellular location">
    <subcellularLocation>
        <location evidence="1">Cytoplasm</location>
    </subcellularLocation>
</comment>
<comment type="domain">
    <text evidence="1">Has 3 domains, the large (RuvB-L) and small ATPase (RuvB-S) domains and the C-terminal head (RuvB-H) domain. The head domain binds DNA, while the ATPase domains jointly bind ATP, ADP or are empty depending on the state of the subunit in the translocation cycle. During a single DNA translocation step the structure of each domain remains the same, but their relative positions change.</text>
</comment>
<comment type="similarity">
    <text evidence="1">Belongs to the RuvB family.</text>
</comment>
<proteinExistence type="inferred from homology"/>
<accession>B1Y8E2</accession>